<organism>
    <name type="scientific">Xanthomonas oryzae pv. oryzae (strain MAFF 311018)</name>
    <dbReference type="NCBI Taxonomy" id="342109"/>
    <lineage>
        <taxon>Bacteria</taxon>
        <taxon>Pseudomonadati</taxon>
        <taxon>Pseudomonadota</taxon>
        <taxon>Gammaproteobacteria</taxon>
        <taxon>Lysobacterales</taxon>
        <taxon>Lysobacteraceae</taxon>
        <taxon>Xanthomonas</taxon>
    </lineage>
</organism>
<name>SYS_XANOM</name>
<accession>Q2P3Y4</accession>
<proteinExistence type="inferred from homology"/>
<reference key="1">
    <citation type="journal article" date="2005" name="Jpn. Agric. Res. Q.">
        <title>Genome sequence of Xanthomonas oryzae pv. oryzae suggests contribution of large numbers of effector genes and insertion sequences to its race diversity.</title>
        <authorList>
            <person name="Ochiai H."/>
            <person name="Inoue Y."/>
            <person name="Takeya M."/>
            <person name="Sasaki A."/>
            <person name="Kaku H."/>
        </authorList>
    </citation>
    <scope>NUCLEOTIDE SEQUENCE [LARGE SCALE GENOMIC DNA]</scope>
    <source>
        <strain>MAFF 311018</strain>
    </source>
</reference>
<comment type="function">
    <text evidence="1">Catalyzes the attachment of serine to tRNA(Ser). Is also able to aminoacylate tRNA(Sec) with serine, to form the misacylated tRNA L-seryl-tRNA(Sec), which will be further converted into selenocysteinyl-tRNA(Sec).</text>
</comment>
<comment type="catalytic activity">
    <reaction evidence="1">
        <text>tRNA(Ser) + L-serine + ATP = L-seryl-tRNA(Ser) + AMP + diphosphate + H(+)</text>
        <dbReference type="Rhea" id="RHEA:12292"/>
        <dbReference type="Rhea" id="RHEA-COMP:9669"/>
        <dbReference type="Rhea" id="RHEA-COMP:9703"/>
        <dbReference type="ChEBI" id="CHEBI:15378"/>
        <dbReference type="ChEBI" id="CHEBI:30616"/>
        <dbReference type="ChEBI" id="CHEBI:33019"/>
        <dbReference type="ChEBI" id="CHEBI:33384"/>
        <dbReference type="ChEBI" id="CHEBI:78442"/>
        <dbReference type="ChEBI" id="CHEBI:78533"/>
        <dbReference type="ChEBI" id="CHEBI:456215"/>
        <dbReference type="EC" id="6.1.1.11"/>
    </reaction>
</comment>
<comment type="catalytic activity">
    <reaction evidence="1">
        <text>tRNA(Sec) + L-serine + ATP = L-seryl-tRNA(Sec) + AMP + diphosphate + H(+)</text>
        <dbReference type="Rhea" id="RHEA:42580"/>
        <dbReference type="Rhea" id="RHEA-COMP:9742"/>
        <dbReference type="Rhea" id="RHEA-COMP:10128"/>
        <dbReference type="ChEBI" id="CHEBI:15378"/>
        <dbReference type="ChEBI" id="CHEBI:30616"/>
        <dbReference type="ChEBI" id="CHEBI:33019"/>
        <dbReference type="ChEBI" id="CHEBI:33384"/>
        <dbReference type="ChEBI" id="CHEBI:78442"/>
        <dbReference type="ChEBI" id="CHEBI:78533"/>
        <dbReference type="ChEBI" id="CHEBI:456215"/>
        <dbReference type="EC" id="6.1.1.11"/>
    </reaction>
</comment>
<comment type="pathway">
    <text evidence="1">Aminoacyl-tRNA biosynthesis; selenocysteinyl-tRNA(Sec) biosynthesis; L-seryl-tRNA(Sec) from L-serine and tRNA(Sec): step 1/1.</text>
</comment>
<comment type="subunit">
    <text evidence="1">Homodimer. The tRNA molecule binds across the dimer.</text>
</comment>
<comment type="subcellular location">
    <subcellularLocation>
        <location evidence="1">Cytoplasm</location>
    </subcellularLocation>
</comment>
<comment type="domain">
    <text evidence="1">Consists of two distinct domains, a catalytic core and a N-terminal extension that is involved in tRNA binding.</text>
</comment>
<comment type="similarity">
    <text evidence="1">Belongs to the class-II aminoacyl-tRNA synthetase family. Type-1 seryl-tRNA synthetase subfamily.</text>
</comment>
<keyword id="KW-0030">Aminoacyl-tRNA synthetase</keyword>
<keyword id="KW-0067">ATP-binding</keyword>
<keyword id="KW-0963">Cytoplasm</keyword>
<keyword id="KW-0436">Ligase</keyword>
<keyword id="KW-0547">Nucleotide-binding</keyword>
<keyword id="KW-0648">Protein biosynthesis</keyword>
<protein>
    <recommendedName>
        <fullName evidence="1">Serine--tRNA ligase</fullName>
        <ecNumber evidence="1">6.1.1.11</ecNumber>
    </recommendedName>
    <alternativeName>
        <fullName evidence="1">Seryl-tRNA synthetase</fullName>
        <shortName evidence="1">SerRS</shortName>
    </alternativeName>
    <alternativeName>
        <fullName evidence="1">Seryl-tRNA(Ser/Sec) synthetase</fullName>
    </alternativeName>
</protein>
<sequence length="449" mass="49959">MLDPALLRQHPADLAERLRSTRGFALDTAKLESLESERKHMQVRTQELQSLRNSKSKAIGQAKAKGEDVAALMAEVAGVGDELLHSHGRLTVVQHELEKIYAVIPNLPHADVPLGKSEADNVEQSRWGTPRQFDFPVKDHVELGAPNGWLDGETAVKLSGARFTVLRGPIARLHRALAQFMLDLHVGEHGYEETNVPLLVNADSMRGTGQLPKFEDDLFRIYENEYEGHTDEETGESFYTPTGGVDPDPAYYLIPTSEVPLTNIVRDEIIDAERLPLRMTAHSMCFRAEAGSGGRDTRGMIRQHQFEKVELVTACAPEDSDAEHQRMTRCAEVVLEQLGLPYRKVLLCTGDMGFSAIKTYDLEVWLPSQNTYREISSCSNCGDFQARRMQARWRNPVSGKLELLHTLNGSGTAVGRAMIAVMENYQNADGSIDVPQVLRPYMGGIERIG</sequence>
<feature type="chain" id="PRO_1000019868" description="Serine--tRNA ligase">
    <location>
        <begin position="1"/>
        <end position="449"/>
    </location>
</feature>
<feature type="binding site" evidence="1">
    <location>
        <begin position="256"/>
        <end position="258"/>
    </location>
    <ligand>
        <name>L-serine</name>
        <dbReference type="ChEBI" id="CHEBI:33384"/>
    </ligand>
</feature>
<feature type="binding site" evidence="1">
    <location>
        <begin position="287"/>
        <end position="289"/>
    </location>
    <ligand>
        <name>ATP</name>
        <dbReference type="ChEBI" id="CHEBI:30616"/>
    </ligand>
</feature>
<feature type="binding site" evidence="1">
    <location>
        <position position="310"/>
    </location>
    <ligand>
        <name>L-serine</name>
        <dbReference type="ChEBI" id="CHEBI:33384"/>
    </ligand>
</feature>
<feature type="binding site" evidence="1">
    <location>
        <begin position="374"/>
        <end position="377"/>
    </location>
    <ligand>
        <name>ATP</name>
        <dbReference type="ChEBI" id="CHEBI:30616"/>
    </ligand>
</feature>
<feature type="binding site" evidence="1">
    <location>
        <position position="410"/>
    </location>
    <ligand>
        <name>L-serine</name>
        <dbReference type="ChEBI" id="CHEBI:33384"/>
    </ligand>
</feature>
<evidence type="ECO:0000255" key="1">
    <source>
        <dbReference type="HAMAP-Rule" id="MF_00176"/>
    </source>
</evidence>
<dbReference type="EC" id="6.1.1.11" evidence="1"/>
<dbReference type="EMBL" id="AP008229">
    <property type="protein sequence ID" value="BAE68743.1"/>
    <property type="molecule type" value="Genomic_DNA"/>
</dbReference>
<dbReference type="RefSeq" id="WP_011258822.1">
    <property type="nucleotide sequence ID" value="NC_007705.1"/>
</dbReference>
<dbReference type="SMR" id="Q2P3Y4"/>
<dbReference type="KEGG" id="xom:XOO1988"/>
<dbReference type="HOGENOM" id="CLU_023797_1_1_6"/>
<dbReference type="UniPathway" id="UPA00906">
    <property type="reaction ID" value="UER00895"/>
</dbReference>
<dbReference type="GO" id="GO:0005737">
    <property type="term" value="C:cytoplasm"/>
    <property type="evidence" value="ECO:0007669"/>
    <property type="project" value="UniProtKB-SubCell"/>
</dbReference>
<dbReference type="GO" id="GO:0005524">
    <property type="term" value="F:ATP binding"/>
    <property type="evidence" value="ECO:0007669"/>
    <property type="project" value="UniProtKB-UniRule"/>
</dbReference>
<dbReference type="GO" id="GO:0004828">
    <property type="term" value="F:serine-tRNA ligase activity"/>
    <property type="evidence" value="ECO:0007669"/>
    <property type="project" value="UniProtKB-UniRule"/>
</dbReference>
<dbReference type="GO" id="GO:0016260">
    <property type="term" value="P:selenocysteine biosynthetic process"/>
    <property type="evidence" value="ECO:0007669"/>
    <property type="project" value="UniProtKB-UniRule"/>
</dbReference>
<dbReference type="GO" id="GO:0006434">
    <property type="term" value="P:seryl-tRNA aminoacylation"/>
    <property type="evidence" value="ECO:0007669"/>
    <property type="project" value="UniProtKB-UniRule"/>
</dbReference>
<dbReference type="CDD" id="cd00770">
    <property type="entry name" value="SerRS_core"/>
    <property type="match status" value="1"/>
</dbReference>
<dbReference type="Gene3D" id="3.30.930.10">
    <property type="entry name" value="Bira Bifunctional Protein, Domain 2"/>
    <property type="match status" value="1"/>
</dbReference>
<dbReference type="Gene3D" id="1.10.287.40">
    <property type="entry name" value="Serine-tRNA synthetase, tRNA binding domain"/>
    <property type="match status" value="1"/>
</dbReference>
<dbReference type="HAMAP" id="MF_00176">
    <property type="entry name" value="Ser_tRNA_synth_type1"/>
    <property type="match status" value="1"/>
</dbReference>
<dbReference type="InterPro" id="IPR002314">
    <property type="entry name" value="aa-tRNA-synt_IIb"/>
</dbReference>
<dbReference type="InterPro" id="IPR006195">
    <property type="entry name" value="aa-tRNA-synth_II"/>
</dbReference>
<dbReference type="InterPro" id="IPR045864">
    <property type="entry name" value="aa-tRNA-synth_II/BPL/LPL"/>
</dbReference>
<dbReference type="InterPro" id="IPR002317">
    <property type="entry name" value="Ser-tRNA-ligase_type_1"/>
</dbReference>
<dbReference type="InterPro" id="IPR015866">
    <property type="entry name" value="Ser-tRNA-synth_1_N"/>
</dbReference>
<dbReference type="InterPro" id="IPR042103">
    <property type="entry name" value="SerRS_1_N_sf"/>
</dbReference>
<dbReference type="InterPro" id="IPR033729">
    <property type="entry name" value="SerRS_core"/>
</dbReference>
<dbReference type="InterPro" id="IPR010978">
    <property type="entry name" value="tRNA-bd_arm"/>
</dbReference>
<dbReference type="NCBIfam" id="TIGR00414">
    <property type="entry name" value="serS"/>
    <property type="match status" value="1"/>
</dbReference>
<dbReference type="PANTHER" id="PTHR43697:SF1">
    <property type="entry name" value="SERINE--TRNA LIGASE"/>
    <property type="match status" value="1"/>
</dbReference>
<dbReference type="PANTHER" id="PTHR43697">
    <property type="entry name" value="SERYL-TRNA SYNTHETASE"/>
    <property type="match status" value="1"/>
</dbReference>
<dbReference type="Pfam" id="PF02403">
    <property type="entry name" value="Seryl_tRNA_N"/>
    <property type="match status" value="1"/>
</dbReference>
<dbReference type="Pfam" id="PF00587">
    <property type="entry name" value="tRNA-synt_2b"/>
    <property type="match status" value="1"/>
</dbReference>
<dbReference type="PIRSF" id="PIRSF001529">
    <property type="entry name" value="Ser-tRNA-synth_IIa"/>
    <property type="match status" value="1"/>
</dbReference>
<dbReference type="PRINTS" id="PR00981">
    <property type="entry name" value="TRNASYNTHSER"/>
</dbReference>
<dbReference type="SUPFAM" id="SSF55681">
    <property type="entry name" value="Class II aaRS and biotin synthetases"/>
    <property type="match status" value="1"/>
</dbReference>
<dbReference type="SUPFAM" id="SSF46589">
    <property type="entry name" value="tRNA-binding arm"/>
    <property type="match status" value="1"/>
</dbReference>
<dbReference type="PROSITE" id="PS50862">
    <property type="entry name" value="AA_TRNA_LIGASE_II"/>
    <property type="match status" value="1"/>
</dbReference>
<gene>
    <name evidence="1" type="primary">serS</name>
    <name type="ordered locus">XOO1988</name>
</gene>